<sequence>MESPEDRNGNDVRQPLLEKIPVKKEAEGEERLCIDEMLQRYCGEFGRWQLKHFVLTCIAWALEAFHTMVMIFADQEPEWRCVGSDCRVGSLNCELDPSSWEWTAGKGSSTVSEWGLICGDKYKVGLVQALFFAGCMIGAGVFGHLSDSKLGRKGSLTVVCIINAIFGIATAFSPNYWTYVVLRFLTGFSTGGVGLTAFVLATEPIGPSKRGVAGMSTFYFFSAGIAVLSGIAYVFRSWRELFIVSSLPSLLFLLIVIPFISESPRWYLVRGKVDEAMKLMHSIAKTNGRHIPAGVTLALDDDVENNNGERNTAVEGSLKDVILSPLMRMRLVISVAISFTVSIVYYGLSLNVGNLKTNLYLNVFVNAVSEMPAFAITAVLLDKYGRKPLSIGTQWFSCVFCLVGFSVWGAGPWKSVRMVSGVLGIFGMAGTYNLLFIYIAELFPTVVRNAALGCATQAAQMGAILAPFVVVLGEELPFGVFAVCGLVGGGLAFYLPETLNKPLYDTMFGMHEAESESNRERGEVIC</sequence>
<gene>
    <name type="primary">OCT4</name>
    <name type="synonym">4-Oct</name>
    <name type="ordered locus">At3g20660</name>
    <name type="ORF">F3H11.5</name>
</gene>
<organism>
    <name type="scientific">Arabidopsis thaliana</name>
    <name type="common">Mouse-ear cress</name>
    <dbReference type="NCBI Taxonomy" id="3702"/>
    <lineage>
        <taxon>Eukaryota</taxon>
        <taxon>Viridiplantae</taxon>
        <taxon>Streptophyta</taxon>
        <taxon>Embryophyta</taxon>
        <taxon>Tracheophyta</taxon>
        <taxon>Spermatophyta</taxon>
        <taxon>Magnoliopsida</taxon>
        <taxon>eudicotyledons</taxon>
        <taxon>Gunneridae</taxon>
        <taxon>Pentapetalae</taxon>
        <taxon>rosids</taxon>
        <taxon>malvids</taxon>
        <taxon>Brassicales</taxon>
        <taxon>Brassicaceae</taxon>
        <taxon>Camelineae</taxon>
        <taxon>Arabidopsis</taxon>
    </lineage>
</organism>
<reference key="1">
    <citation type="journal article" date="2000" name="DNA Res.">
        <title>Structural analysis of Arabidopsis thaliana chromosome 3. II. Sequence features of the 4,251,695 bp regions covered by 90 P1, TAC and BAC clones.</title>
        <authorList>
            <person name="Kaneko T."/>
            <person name="Katoh T."/>
            <person name="Sato S."/>
            <person name="Nakamura Y."/>
            <person name="Asamizu E."/>
            <person name="Tabata S."/>
        </authorList>
    </citation>
    <scope>NUCLEOTIDE SEQUENCE [LARGE SCALE GENOMIC DNA]</scope>
    <source>
        <strain>cv. Columbia</strain>
    </source>
</reference>
<reference key="2">
    <citation type="journal article" date="2017" name="Plant J.">
        <title>Araport11: a complete reannotation of the Arabidopsis thaliana reference genome.</title>
        <authorList>
            <person name="Cheng C.Y."/>
            <person name="Krishnakumar V."/>
            <person name="Chan A.P."/>
            <person name="Thibaud-Nissen F."/>
            <person name="Schobel S."/>
            <person name="Town C.D."/>
        </authorList>
    </citation>
    <scope>GENOME REANNOTATION</scope>
    <source>
        <strain>cv. Columbia</strain>
    </source>
</reference>
<reference key="3">
    <citation type="submission" date="2003-11" db="EMBL/GenBank/DDBJ databases">
        <title>Arabidopsis cDNA clones.</title>
        <authorList>
            <person name="Cheuk R.F."/>
            <person name="Chen H."/>
            <person name="Kim C.J."/>
            <person name="Shinn P."/>
            <person name="Carninci P."/>
            <person name="Hayashizaki Y."/>
            <person name="Ishida J."/>
            <person name="Kamiya A."/>
            <person name="Kawai J."/>
            <person name="Narusaka M."/>
            <person name="Sakurai T."/>
            <person name="Satou M."/>
            <person name="Seki M."/>
            <person name="Shinozaki K."/>
            <person name="Ecker J.R."/>
        </authorList>
    </citation>
    <scope>NUCLEOTIDE SEQUENCE [LARGE SCALE MRNA]</scope>
    <source>
        <strain>cv. Columbia</strain>
    </source>
</reference>
<reference key="4">
    <citation type="submission" date="2004-09" db="EMBL/GenBank/DDBJ databases">
        <title>Large-scale analysis of RIKEN Arabidopsis full-length (RAFL) cDNAs.</title>
        <authorList>
            <person name="Totoki Y."/>
            <person name="Seki M."/>
            <person name="Ishida J."/>
            <person name="Nakajima M."/>
            <person name="Enju A."/>
            <person name="Kamiya A."/>
            <person name="Narusaka M."/>
            <person name="Shin-i T."/>
            <person name="Nakagawa M."/>
            <person name="Sakamoto N."/>
            <person name="Oishi K."/>
            <person name="Kohara Y."/>
            <person name="Kobayashi M."/>
            <person name="Toyoda A."/>
            <person name="Sakaki Y."/>
            <person name="Sakurai T."/>
            <person name="Iida K."/>
            <person name="Akiyama K."/>
            <person name="Satou M."/>
            <person name="Toyoda T."/>
            <person name="Konagaya A."/>
            <person name="Carninci P."/>
            <person name="Kawai J."/>
            <person name="Hayashizaki Y."/>
            <person name="Shinozaki K."/>
        </authorList>
    </citation>
    <scope>NUCLEOTIDE SEQUENCE [LARGE SCALE MRNA]</scope>
    <source>
        <strain>cv. Columbia</strain>
    </source>
</reference>
<reference key="5">
    <citation type="journal article" date="2006" name="Plant Physiol.">
        <title>Integrating membrane transport with male gametophyte development and function through transcriptomics.</title>
        <authorList>
            <person name="Bock K.W."/>
            <person name="Honys D."/>
            <person name="Ward J.M."/>
            <person name="Padmanaban S."/>
            <person name="Nawrocki E.P."/>
            <person name="Hirschi K.D."/>
            <person name="Twell D."/>
            <person name="Sze H."/>
        </authorList>
    </citation>
    <scope>TISSUE SPECIFICITY [LARGE SCALE ANALYSIS]</scope>
</reference>
<reference key="6">
    <citation type="journal article" date="2008" name="BMC Res. Notes">
        <title>Stress regulated members of the plant organic cation transporter family are localized to the vacuolar membrane.</title>
        <authorList>
            <person name="Kuefner I."/>
            <person name="Koch W."/>
        </authorList>
    </citation>
    <scope>SUBCELLULAR LOCATION</scope>
    <scope>INDUCTION BY ABIOTIC STRESS</scope>
    <scope>TISSUE SPECIFICITY</scope>
    <source>
        <strain>cv. Columbia</strain>
    </source>
</reference>
<comment type="function">
    <text evidence="1">High affinity carnitine transporter involved in the active cellular uptake of carnitine. Also transports organic cations (By similarity).</text>
</comment>
<comment type="subcellular location">
    <subcellularLocation>
        <location evidence="4">Vacuole membrane</location>
        <topology evidence="4">Multi-pass membrane protein</topology>
    </subcellularLocation>
</comment>
<comment type="tissue specificity">
    <text evidence="3 4">Mostly expressed in siliques, and, to a lower extent, in stems, leaves, flowers and siliques. Present in pollen. In the stems of secondary inflorescences present in the phloem cells and xylem parenchyma cells.</text>
</comment>
<comment type="induction">
    <text evidence="4">During drought stress treatment.</text>
</comment>
<comment type="similarity">
    <text evidence="5">Belongs to the major facilitator (TC 2.A.1) superfamily. Organic cation transporter (TC 2.A.1.19) family.</text>
</comment>
<feature type="chain" id="PRO_0000415360" description="Organic cation/carnitine transporter 4">
    <location>
        <begin position="1"/>
        <end position="526"/>
    </location>
</feature>
<feature type="topological domain" description="Cytoplasmic" evidence="2">
    <location>
        <begin position="1"/>
        <end position="52"/>
    </location>
</feature>
<feature type="transmembrane region" description="Helical; Name=1" evidence="2">
    <location>
        <begin position="53"/>
        <end position="73"/>
    </location>
</feature>
<feature type="topological domain" description="Extracellular" evidence="2">
    <location>
        <begin position="74"/>
        <end position="123"/>
    </location>
</feature>
<feature type="transmembrane region" description="Helical; Name=2" evidence="2">
    <location>
        <begin position="124"/>
        <end position="144"/>
    </location>
</feature>
<feature type="topological domain" description="Cytoplasmic" evidence="2">
    <location>
        <begin position="145"/>
        <end position="153"/>
    </location>
</feature>
<feature type="transmembrane region" description="Helical; Name=3" evidence="2">
    <location>
        <begin position="154"/>
        <end position="174"/>
    </location>
</feature>
<feature type="topological domain" description="Extracellular" evidence="2">
    <location>
        <begin position="175"/>
        <end position="179"/>
    </location>
</feature>
<feature type="transmembrane region" description="Helical; Name=4" evidence="2">
    <location>
        <begin position="180"/>
        <end position="200"/>
    </location>
</feature>
<feature type="topological domain" description="Cytoplasmic" evidence="2">
    <location>
        <begin position="201"/>
        <end position="214"/>
    </location>
</feature>
<feature type="transmembrane region" description="Helical; Name=5" evidence="2">
    <location>
        <begin position="215"/>
        <end position="235"/>
    </location>
</feature>
<feature type="topological domain" description="Extracellular" evidence="2">
    <location>
        <begin position="236"/>
        <end position="240"/>
    </location>
</feature>
<feature type="transmembrane region" description="Helical; Name=6" evidence="2">
    <location>
        <begin position="241"/>
        <end position="261"/>
    </location>
</feature>
<feature type="topological domain" description="Cytoplasmic" evidence="2">
    <location>
        <begin position="262"/>
        <end position="331"/>
    </location>
</feature>
<feature type="transmembrane region" description="Helical; Name=7" evidence="2">
    <location>
        <begin position="332"/>
        <end position="352"/>
    </location>
</feature>
<feature type="topological domain" description="Extracellular" evidence="2">
    <location>
        <begin position="353"/>
        <end position="360"/>
    </location>
</feature>
<feature type="transmembrane region" description="Helical; Name=8" evidence="2">
    <location>
        <begin position="361"/>
        <end position="381"/>
    </location>
</feature>
<feature type="topological domain" description="Cytoplasmic" evidence="2">
    <location>
        <begin position="382"/>
        <end position="390"/>
    </location>
</feature>
<feature type="transmembrane region" description="Helical; Name=9" evidence="2">
    <location>
        <begin position="391"/>
        <end position="411"/>
    </location>
</feature>
<feature type="topological domain" description="Extracellular" evidence="2">
    <location>
        <begin position="412"/>
        <end position="418"/>
    </location>
</feature>
<feature type="transmembrane region" description="Helical; Name=10" evidence="2">
    <location>
        <begin position="419"/>
        <end position="439"/>
    </location>
</feature>
<feature type="topological domain" description="Cytoplasmic" evidence="2">
    <location>
        <begin position="440"/>
        <end position="451"/>
    </location>
</feature>
<feature type="transmembrane region" description="Helical; Name=11" evidence="2">
    <location>
        <begin position="452"/>
        <end position="472"/>
    </location>
</feature>
<feature type="topological domain" description="Extracellular" evidence="2">
    <location>
        <begin position="473"/>
        <end position="475"/>
    </location>
</feature>
<feature type="transmembrane region" description="Helical; Name=12" evidence="2">
    <location>
        <begin position="476"/>
        <end position="496"/>
    </location>
</feature>
<feature type="topological domain" description="Cytoplasmic" evidence="2">
    <location>
        <begin position="497"/>
        <end position="526"/>
    </location>
</feature>
<feature type="binding site" evidence="2">
    <location>
        <begin position="201"/>
        <end position="208"/>
    </location>
    <ligand>
        <name>ATP</name>
        <dbReference type="ChEBI" id="CHEBI:30616"/>
    </ligand>
</feature>
<keyword id="KW-0067">ATP-binding</keyword>
<keyword id="KW-0406">Ion transport</keyword>
<keyword id="KW-0472">Membrane</keyword>
<keyword id="KW-0547">Nucleotide-binding</keyword>
<keyword id="KW-1185">Reference proteome</keyword>
<keyword id="KW-0812">Transmembrane</keyword>
<keyword id="KW-1133">Transmembrane helix</keyword>
<keyword id="KW-0813">Transport</keyword>
<keyword id="KW-0926">Vacuole</keyword>
<evidence type="ECO:0000250" key="1"/>
<evidence type="ECO:0000255" key="2"/>
<evidence type="ECO:0000269" key="3">
    <source>
    </source>
</evidence>
<evidence type="ECO:0000269" key="4">
    <source>
    </source>
</evidence>
<evidence type="ECO:0000305" key="5"/>
<name>OCT4_ARATH</name>
<dbReference type="EMBL" id="AP002034">
    <property type="protein sequence ID" value="BAB02242.1"/>
    <property type="molecule type" value="Genomic_DNA"/>
</dbReference>
<dbReference type="EMBL" id="CP002686">
    <property type="protein sequence ID" value="AEE76409.1"/>
    <property type="molecule type" value="Genomic_DNA"/>
</dbReference>
<dbReference type="EMBL" id="BT010744">
    <property type="protein sequence ID" value="AAR23714.1"/>
    <property type="molecule type" value="mRNA"/>
</dbReference>
<dbReference type="EMBL" id="AK176424">
    <property type="protein sequence ID" value="BAD44187.1"/>
    <property type="molecule type" value="mRNA"/>
</dbReference>
<dbReference type="RefSeq" id="NP_188702.2">
    <property type="nucleotide sequence ID" value="NM_112957.3"/>
</dbReference>
<dbReference type="SMR" id="Q9LHQ6"/>
<dbReference type="FunCoup" id="Q9LHQ6">
    <property type="interactions" value="64"/>
</dbReference>
<dbReference type="STRING" id="3702.Q9LHQ6"/>
<dbReference type="TCDB" id="2.A.1.19.43">
    <property type="family name" value="the major facilitator superfamily (mfs)"/>
</dbReference>
<dbReference type="PaxDb" id="3702-AT3G20660.1"/>
<dbReference type="ProteomicsDB" id="250865"/>
<dbReference type="EnsemblPlants" id="AT3G20660.1">
    <property type="protein sequence ID" value="AT3G20660.1"/>
    <property type="gene ID" value="AT3G20660"/>
</dbReference>
<dbReference type="GeneID" id="821613"/>
<dbReference type="Gramene" id="AT3G20660.1">
    <property type="protein sequence ID" value="AT3G20660.1"/>
    <property type="gene ID" value="AT3G20660"/>
</dbReference>
<dbReference type="KEGG" id="ath:AT3G20660"/>
<dbReference type="Araport" id="AT3G20660"/>
<dbReference type="TAIR" id="AT3G20660">
    <property type="gene designation" value="OCT4"/>
</dbReference>
<dbReference type="eggNOG" id="KOG0255">
    <property type="taxonomic scope" value="Eukaryota"/>
</dbReference>
<dbReference type="HOGENOM" id="CLU_001265_33_5_1"/>
<dbReference type="InParanoid" id="Q9LHQ6"/>
<dbReference type="OMA" id="RIIYCTL"/>
<dbReference type="PhylomeDB" id="Q9LHQ6"/>
<dbReference type="PRO" id="PR:Q9LHQ6"/>
<dbReference type="Proteomes" id="UP000006548">
    <property type="component" value="Chromosome 3"/>
</dbReference>
<dbReference type="ExpressionAtlas" id="Q9LHQ6">
    <property type="expression patterns" value="baseline and differential"/>
</dbReference>
<dbReference type="GO" id="GO:0009535">
    <property type="term" value="C:chloroplast thylakoid membrane"/>
    <property type="evidence" value="ECO:0007005"/>
    <property type="project" value="TAIR"/>
</dbReference>
<dbReference type="GO" id="GO:0009705">
    <property type="term" value="C:plant-type vacuole membrane"/>
    <property type="evidence" value="ECO:0000314"/>
    <property type="project" value="UniProtKB"/>
</dbReference>
<dbReference type="GO" id="GO:0005524">
    <property type="term" value="F:ATP binding"/>
    <property type="evidence" value="ECO:0007669"/>
    <property type="project" value="UniProtKB-KW"/>
</dbReference>
<dbReference type="GO" id="GO:0022857">
    <property type="term" value="F:transmembrane transporter activity"/>
    <property type="evidence" value="ECO:0007669"/>
    <property type="project" value="InterPro"/>
</dbReference>
<dbReference type="GO" id="GO:0042631">
    <property type="term" value="P:cellular response to water deprivation"/>
    <property type="evidence" value="ECO:0000270"/>
    <property type="project" value="UniProtKB"/>
</dbReference>
<dbReference type="GO" id="GO:0006811">
    <property type="term" value="P:monoatomic ion transport"/>
    <property type="evidence" value="ECO:0007669"/>
    <property type="project" value="UniProtKB-KW"/>
</dbReference>
<dbReference type="CDD" id="cd17378">
    <property type="entry name" value="MFS_OCT_plant"/>
    <property type="match status" value="1"/>
</dbReference>
<dbReference type="FunFam" id="1.20.1250.20:FF:000763">
    <property type="entry name" value="Organic cation/carnitine transporter 4"/>
    <property type="match status" value="1"/>
</dbReference>
<dbReference type="Gene3D" id="1.20.1250.20">
    <property type="entry name" value="MFS general substrate transporter like domains"/>
    <property type="match status" value="1"/>
</dbReference>
<dbReference type="InterPro" id="IPR020846">
    <property type="entry name" value="MFS_dom"/>
</dbReference>
<dbReference type="InterPro" id="IPR005828">
    <property type="entry name" value="MFS_sugar_transport-like"/>
</dbReference>
<dbReference type="InterPro" id="IPR036259">
    <property type="entry name" value="MFS_trans_sf"/>
</dbReference>
<dbReference type="InterPro" id="IPR005829">
    <property type="entry name" value="Sugar_transporter_CS"/>
</dbReference>
<dbReference type="PANTHER" id="PTHR24064">
    <property type="entry name" value="SOLUTE CARRIER FAMILY 22 MEMBER"/>
    <property type="match status" value="1"/>
</dbReference>
<dbReference type="Pfam" id="PF00083">
    <property type="entry name" value="Sugar_tr"/>
    <property type="match status" value="1"/>
</dbReference>
<dbReference type="SUPFAM" id="SSF103473">
    <property type="entry name" value="MFS general substrate transporter"/>
    <property type="match status" value="1"/>
</dbReference>
<dbReference type="PROSITE" id="PS50850">
    <property type="entry name" value="MFS"/>
    <property type="match status" value="1"/>
</dbReference>
<dbReference type="PROSITE" id="PS00216">
    <property type="entry name" value="SUGAR_TRANSPORT_1"/>
    <property type="match status" value="1"/>
</dbReference>
<dbReference type="PROSITE" id="PS00217">
    <property type="entry name" value="SUGAR_TRANSPORT_2"/>
    <property type="match status" value="1"/>
</dbReference>
<accession>Q9LHQ6</accession>
<proteinExistence type="evidence at transcript level"/>
<protein>
    <recommendedName>
        <fullName>Organic cation/carnitine transporter 4</fullName>
        <shortName>AtOCT4</shortName>
    </recommendedName>
</protein>